<feature type="chain" id="PRO_1000047760" description="Porphobilinogen deaminase">
    <location>
        <begin position="1"/>
        <end position="315"/>
    </location>
</feature>
<feature type="modified residue" description="S-(dipyrrolylmethanemethyl)cysteine" evidence="1">
    <location>
        <position position="238"/>
    </location>
</feature>
<comment type="function">
    <text evidence="1">Tetrapolymerization of the monopyrrole PBG into the hydroxymethylbilane pre-uroporphyrinogen in several discrete steps.</text>
</comment>
<comment type="catalytic activity">
    <reaction evidence="1">
        <text>4 porphobilinogen + H2O = hydroxymethylbilane + 4 NH4(+)</text>
        <dbReference type="Rhea" id="RHEA:13185"/>
        <dbReference type="ChEBI" id="CHEBI:15377"/>
        <dbReference type="ChEBI" id="CHEBI:28938"/>
        <dbReference type="ChEBI" id="CHEBI:57845"/>
        <dbReference type="ChEBI" id="CHEBI:58126"/>
        <dbReference type="EC" id="2.5.1.61"/>
    </reaction>
</comment>
<comment type="cofactor">
    <cofactor evidence="1">
        <name>dipyrromethane</name>
        <dbReference type="ChEBI" id="CHEBI:60342"/>
    </cofactor>
    <text evidence="1">Binds 1 dipyrromethane group covalently.</text>
</comment>
<comment type="pathway">
    <text evidence="1">Porphyrin-containing compound metabolism; protoporphyrin-IX biosynthesis; coproporphyrinogen-III from 5-aminolevulinate: step 2/4.</text>
</comment>
<comment type="subunit">
    <text evidence="1">Monomer.</text>
</comment>
<comment type="miscellaneous">
    <text evidence="1">The porphobilinogen subunits are added to the dipyrromethane group.</text>
</comment>
<comment type="similarity">
    <text evidence="1">Belongs to the HMBS family.</text>
</comment>
<reference key="1">
    <citation type="submission" date="2006-02" db="EMBL/GenBank/DDBJ databases">
        <title>Complete sequence of chromosome of Rhodoferax ferrireducens DSM 15236.</title>
        <authorList>
            <person name="Copeland A."/>
            <person name="Lucas S."/>
            <person name="Lapidus A."/>
            <person name="Barry K."/>
            <person name="Detter J.C."/>
            <person name="Glavina del Rio T."/>
            <person name="Hammon N."/>
            <person name="Israni S."/>
            <person name="Pitluck S."/>
            <person name="Brettin T."/>
            <person name="Bruce D."/>
            <person name="Han C."/>
            <person name="Tapia R."/>
            <person name="Gilna P."/>
            <person name="Kiss H."/>
            <person name="Schmutz J."/>
            <person name="Larimer F."/>
            <person name="Land M."/>
            <person name="Kyrpides N."/>
            <person name="Ivanova N."/>
            <person name="Richardson P."/>
        </authorList>
    </citation>
    <scope>NUCLEOTIDE SEQUENCE [LARGE SCALE GENOMIC DNA]</scope>
    <source>
        <strain>ATCC BAA-621 / DSM 15236 / T118</strain>
    </source>
</reference>
<proteinExistence type="inferred from homology"/>
<organism>
    <name type="scientific">Albidiferax ferrireducens (strain ATCC BAA-621 / DSM 15236 / T118)</name>
    <name type="common">Rhodoferax ferrireducens</name>
    <dbReference type="NCBI Taxonomy" id="338969"/>
    <lineage>
        <taxon>Bacteria</taxon>
        <taxon>Pseudomonadati</taxon>
        <taxon>Pseudomonadota</taxon>
        <taxon>Betaproteobacteria</taxon>
        <taxon>Burkholderiales</taxon>
        <taxon>Comamonadaceae</taxon>
        <taxon>Rhodoferax</taxon>
    </lineage>
</organism>
<gene>
    <name evidence="1" type="primary">hemC</name>
    <name type="ordered locus">Rfer_1715</name>
</gene>
<protein>
    <recommendedName>
        <fullName evidence="1">Porphobilinogen deaminase</fullName>
        <shortName evidence="1">PBG</shortName>
        <ecNumber evidence="1">2.5.1.61</ecNumber>
    </recommendedName>
    <alternativeName>
        <fullName evidence="1">Hydroxymethylbilane synthase</fullName>
        <shortName evidence="1">HMBS</shortName>
    </alternativeName>
    <alternativeName>
        <fullName evidence="1">Pre-uroporphyrinogen synthase</fullName>
    </alternativeName>
</protein>
<keyword id="KW-0627">Porphyrin biosynthesis</keyword>
<keyword id="KW-1185">Reference proteome</keyword>
<keyword id="KW-0808">Transferase</keyword>
<name>HEM3_ALBFT</name>
<evidence type="ECO:0000255" key="1">
    <source>
        <dbReference type="HAMAP-Rule" id="MF_00260"/>
    </source>
</evidence>
<sequence length="315" mass="33227">MSTLTIATRESRLALWQAEYVQDLLTRRGHQVGLLGMTTLGDQILDRALSKVGGKGLFVKELEVALEDGRADLAVHSLKDVPMELPDGFALACVMEREDPRDAFVSNQYANLASLPQGAVVGTSSLRRMALLRALRPDLKIEPLRGNLDTRLRKLDDGMYAAIVLAAAGLKRLGLSQRIRATFEPTDMLPAAGQGALGIEVRSQRQDVIDALAPLAHHTTWLAVSAERAVSRAMGGSCSMPLAAYATLAADILTIDAAWGDPDGKLALVHVRASAAVSDLASATALGARVAADLRAAVLANGGTLLVADAPQGQA</sequence>
<accession>Q21XQ9</accession>
<dbReference type="EC" id="2.5.1.61" evidence="1"/>
<dbReference type="EMBL" id="CP000267">
    <property type="protein sequence ID" value="ABD69444.1"/>
    <property type="molecule type" value="Genomic_DNA"/>
</dbReference>
<dbReference type="RefSeq" id="WP_011464012.1">
    <property type="nucleotide sequence ID" value="NC_007908.1"/>
</dbReference>
<dbReference type="SMR" id="Q21XQ9"/>
<dbReference type="STRING" id="338969.Rfer_1715"/>
<dbReference type="KEGG" id="rfr:Rfer_1715"/>
<dbReference type="eggNOG" id="COG0181">
    <property type="taxonomic scope" value="Bacteria"/>
</dbReference>
<dbReference type="HOGENOM" id="CLU_019704_0_2_4"/>
<dbReference type="OrthoDB" id="9810298at2"/>
<dbReference type="UniPathway" id="UPA00251">
    <property type="reaction ID" value="UER00319"/>
</dbReference>
<dbReference type="Proteomes" id="UP000008332">
    <property type="component" value="Chromosome"/>
</dbReference>
<dbReference type="GO" id="GO:0005737">
    <property type="term" value="C:cytoplasm"/>
    <property type="evidence" value="ECO:0007669"/>
    <property type="project" value="TreeGrafter"/>
</dbReference>
<dbReference type="GO" id="GO:0004418">
    <property type="term" value="F:hydroxymethylbilane synthase activity"/>
    <property type="evidence" value="ECO:0007669"/>
    <property type="project" value="UniProtKB-UniRule"/>
</dbReference>
<dbReference type="GO" id="GO:0006782">
    <property type="term" value="P:protoporphyrinogen IX biosynthetic process"/>
    <property type="evidence" value="ECO:0007669"/>
    <property type="project" value="UniProtKB-UniRule"/>
</dbReference>
<dbReference type="CDD" id="cd13646">
    <property type="entry name" value="PBP2_EcHMBS_like"/>
    <property type="match status" value="1"/>
</dbReference>
<dbReference type="FunFam" id="3.40.190.10:FF:000004">
    <property type="entry name" value="Porphobilinogen deaminase"/>
    <property type="match status" value="1"/>
</dbReference>
<dbReference type="FunFam" id="3.40.190.10:FF:000005">
    <property type="entry name" value="Porphobilinogen deaminase"/>
    <property type="match status" value="1"/>
</dbReference>
<dbReference type="Gene3D" id="3.40.190.10">
    <property type="entry name" value="Periplasmic binding protein-like II"/>
    <property type="match status" value="2"/>
</dbReference>
<dbReference type="Gene3D" id="3.30.160.40">
    <property type="entry name" value="Porphobilinogen deaminase, C-terminal domain"/>
    <property type="match status" value="1"/>
</dbReference>
<dbReference type="HAMAP" id="MF_00260">
    <property type="entry name" value="Porphobil_deam"/>
    <property type="match status" value="1"/>
</dbReference>
<dbReference type="InterPro" id="IPR000860">
    <property type="entry name" value="HemC"/>
</dbReference>
<dbReference type="InterPro" id="IPR022417">
    <property type="entry name" value="Porphobilin_deaminase_N"/>
</dbReference>
<dbReference type="InterPro" id="IPR022418">
    <property type="entry name" value="Porphobilinogen_deaminase_C"/>
</dbReference>
<dbReference type="InterPro" id="IPR036803">
    <property type="entry name" value="Porphobilinogen_deaminase_C_sf"/>
</dbReference>
<dbReference type="NCBIfam" id="TIGR00212">
    <property type="entry name" value="hemC"/>
    <property type="match status" value="1"/>
</dbReference>
<dbReference type="PANTHER" id="PTHR11557">
    <property type="entry name" value="PORPHOBILINOGEN DEAMINASE"/>
    <property type="match status" value="1"/>
</dbReference>
<dbReference type="PANTHER" id="PTHR11557:SF0">
    <property type="entry name" value="PORPHOBILINOGEN DEAMINASE"/>
    <property type="match status" value="1"/>
</dbReference>
<dbReference type="Pfam" id="PF01379">
    <property type="entry name" value="Porphobil_deam"/>
    <property type="match status" value="1"/>
</dbReference>
<dbReference type="Pfam" id="PF03900">
    <property type="entry name" value="Porphobil_deamC"/>
    <property type="match status" value="1"/>
</dbReference>
<dbReference type="PIRSF" id="PIRSF001438">
    <property type="entry name" value="4pyrrol_synth_OHMeBilane_synth"/>
    <property type="match status" value="1"/>
</dbReference>
<dbReference type="PRINTS" id="PR00151">
    <property type="entry name" value="PORPHBDMNASE"/>
</dbReference>
<dbReference type="SUPFAM" id="SSF53850">
    <property type="entry name" value="Periplasmic binding protein-like II"/>
    <property type="match status" value="1"/>
</dbReference>
<dbReference type="SUPFAM" id="SSF54782">
    <property type="entry name" value="Porphobilinogen deaminase (hydroxymethylbilane synthase), C-terminal domain"/>
    <property type="match status" value="1"/>
</dbReference>